<name>DABA_STAAR</name>
<reference key="1">
    <citation type="journal article" date="2004" name="Proc. Natl. Acad. Sci. U.S.A.">
        <title>Complete genomes of two clinical Staphylococcus aureus strains: evidence for the rapid evolution of virulence and drug resistance.</title>
        <authorList>
            <person name="Holden M.T.G."/>
            <person name="Feil E.J."/>
            <person name="Lindsay J.A."/>
            <person name="Peacock S.J."/>
            <person name="Day N.P.J."/>
            <person name="Enright M.C."/>
            <person name="Foster T.J."/>
            <person name="Moore C.E."/>
            <person name="Hurst L."/>
            <person name="Atkin R."/>
            <person name="Barron A."/>
            <person name="Bason N."/>
            <person name="Bentley S.D."/>
            <person name="Chillingworth C."/>
            <person name="Chillingworth T."/>
            <person name="Churcher C."/>
            <person name="Clark L."/>
            <person name="Corton C."/>
            <person name="Cronin A."/>
            <person name="Doggett J."/>
            <person name="Dowd L."/>
            <person name="Feltwell T."/>
            <person name="Hance Z."/>
            <person name="Harris B."/>
            <person name="Hauser H."/>
            <person name="Holroyd S."/>
            <person name="Jagels K."/>
            <person name="James K.D."/>
            <person name="Lennard N."/>
            <person name="Line A."/>
            <person name="Mayes R."/>
            <person name="Moule S."/>
            <person name="Mungall K."/>
            <person name="Ormond D."/>
            <person name="Quail M.A."/>
            <person name="Rabbinowitsch E."/>
            <person name="Rutherford K.M."/>
            <person name="Sanders M."/>
            <person name="Sharp S."/>
            <person name="Simmonds M."/>
            <person name="Stevens K."/>
            <person name="Whitehead S."/>
            <person name="Barrell B.G."/>
            <person name="Spratt B.G."/>
            <person name="Parkhill J."/>
        </authorList>
    </citation>
    <scope>NUCLEOTIDE SEQUENCE [LARGE SCALE GENOMIC DNA]</scope>
    <source>
        <strain>MRSA252</strain>
    </source>
</reference>
<organism>
    <name type="scientific">Staphylococcus aureus (strain MRSA252)</name>
    <dbReference type="NCBI Taxonomy" id="282458"/>
    <lineage>
        <taxon>Bacteria</taxon>
        <taxon>Bacillati</taxon>
        <taxon>Bacillota</taxon>
        <taxon>Bacilli</taxon>
        <taxon>Bacillales</taxon>
        <taxon>Staphylococcaceae</taxon>
        <taxon>Staphylococcus</taxon>
    </lineage>
</organism>
<keyword id="KW-1003">Cell membrane</keyword>
<keyword id="KW-0472">Membrane</keyword>
<keyword id="KW-0479">Metal-binding</keyword>
<keyword id="KW-0813">Transport</keyword>
<keyword id="KW-0862">Zinc</keyword>
<dbReference type="EMBL" id="BX571856">
    <property type="protein sequence ID" value="CAG39473.1"/>
    <property type="molecule type" value="Genomic_DNA"/>
</dbReference>
<dbReference type="RefSeq" id="WP_000211555.1">
    <property type="nucleotide sequence ID" value="NC_002952.2"/>
</dbReference>
<dbReference type="KEGG" id="sar:SAR0453"/>
<dbReference type="HOGENOM" id="CLU_009885_0_0_9"/>
<dbReference type="Proteomes" id="UP000000596">
    <property type="component" value="Chromosome"/>
</dbReference>
<dbReference type="GO" id="GO:0005886">
    <property type="term" value="C:plasma membrane"/>
    <property type="evidence" value="ECO:0007669"/>
    <property type="project" value="UniProtKB-SubCell"/>
</dbReference>
<dbReference type="GO" id="GO:0008270">
    <property type="term" value="F:zinc ion binding"/>
    <property type="evidence" value="ECO:0007669"/>
    <property type="project" value="UniProtKB-UniRule"/>
</dbReference>
<dbReference type="HAMAP" id="MF_01871">
    <property type="entry name" value="DabA"/>
    <property type="match status" value="1"/>
</dbReference>
<dbReference type="InterPro" id="IPR018752">
    <property type="entry name" value="DabA"/>
</dbReference>
<dbReference type="PANTHER" id="PTHR38344:SF1">
    <property type="entry name" value="INORGANIC CARBON TRANSPORTER SUBUNIT DABA-RELATED"/>
    <property type="match status" value="1"/>
</dbReference>
<dbReference type="PANTHER" id="PTHR38344">
    <property type="entry name" value="UPF0753 PROTEIN AQ_863"/>
    <property type="match status" value="1"/>
</dbReference>
<dbReference type="Pfam" id="PF10070">
    <property type="entry name" value="DabA"/>
    <property type="match status" value="1"/>
</dbReference>
<comment type="function">
    <text evidence="1">Part of an energy-coupled inorganic carbon pump.</text>
</comment>
<comment type="cofactor">
    <cofactor evidence="1">
        <name>Zn(2+)</name>
        <dbReference type="ChEBI" id="CHEBI:29105"/>
    </cofactor>
</comment>
<comment type="subunit">
    <text evidence="1">Forms a complex with DabB.</text>
</comment>
<comment type="subcellular location">
    <subcellularLocation>
        <location evidence="1">Cell membrane</location>
        <topology evidence="1">Peripheral membrane protein</topology>
    </subcellularLocation>
</comment>
<comment type="similarity">
    <text evidence="1">Belongs to the inorganic carbon transporter (TC 9.A.2) DabA family.</text>
</comment>
<accession>Q6GJM1</accession>
<sequence length="901" mass="102492">MTTQLNINSVIENAKRVITPLSPISIFAARNPWEGLEADTFEDVAKWLRDVRDVDIFPNKALIESAVARGELDESVFNQLVTDMLLEHHYNIPQHYINLYIDNIKTLKDVPASYMNHSNVDVVADLLLEKSKRDMAESYHHYDVRPMSDAIIDEQGEPLSEQVNRQMIKWTKLYIDQFLSSWTMPKREQSFYHAWLHLAQHDHSFTKAQRQVIKGLPNDPKMTIESVLNHFSIAQEDYQAYVEGHLLALPGWAGILYYRSQQHHFEQHLLTDYLAIRLVVEQLLVGDEFKSVTKDCESRSENWFKQTVASWCYYSDMPSDVLLQHDVNEIQTFIHFAATMNKNVFKNLWLIAWEMTYESQLKQKIKAGHESVAGALDVNQVNVTENDNANQSHSVSLNATQAVDENNSELNQVGTSTKAQIAFCIDVRSEPFRRHIEAAGPFETIGIAGFFGLPIQKDAVDEQFKHDSLPVMVPPAYRIKEFADRYDMNVYRQQQQTMSSMFYTFKLMKNNVMPSLLLPELSGPFLSLSTIVNSIMPRKSRVSLQKIKQKWLKKPETKLTIDREFDRTSDLPVGFTEQEQIDFALQALKLMDLTEAFAPFVVLAGHASHSHNNPHHASLECGACGGASSGFNAKLLAMICNRPNVRQGLKQAGVYIPETTVFAAAEHHTSTDTLAWVYVPDTLSALALDAYESLNDVMPMISEHANRERLDKLPTIGRVNHPVEEAQRFASDWSEVRPEWGLAKNASFIIGRRQLTKGIDLEGRTFLHNYDWRKDKDGKLLNTIISGPALVAQWINLQYYASTVAPHFYGSGNKATQTVTSGVGVMQGNASDLMYGLSWQSVMAADRTMYHSPIRLLVVVQAPDFVVARLLANNEHFARKVSNHWLRLMSVNEEGRFKSWI</sequence>
<evidence type="ECO:0000255" key="1">
    <source>
        <dbReference type="HAMAP-Rule" id="MF_01871"/>
    </source>
</evidence>
<feature type="chain" id="PRO_0000387306" description="Probable inorganic carbon transporter subunit DabA">
    <location>
        <begin position="1"/>
        <end position="901"/>
    </location>
</feature>
<feature type="binding site" evidence="1">
    <location>
        <position position="424"/>
    </location>
    <ligand>
        <name>Zn(2+)</name>
        <dbReference type="ChEBI" id="CHEBI:29105"/>
    </ligand>
</feature>
<feature type="binding site" evidence="1">
    <location>
        <position position="426"/>
    </location>
    <ligand>
        <name>Zn(2+)</name>
        <dbReference type="ChEBI" id="CHEBI:29105"/>
    </ligand>
</feature>
<feature type="binding site" evidence="1">
    <location>
        <position position="606"/>
    </location>
    <ligand>
        <name>Zn(2+)</name>
        <dbReference type="ChEBI" id="CHEBI:29105"/>
    </ligand>
</feature>
<feature type="binding site" evidence="1">
    <location>
        <position position="621"/>
    </location>
    <ligand>
        <name>Zn(2+)</name>
        <dbReference type="ChEBI" id="CHEBI:29105"/>
    </ligand>
</feature>
<proteinExistence type="inferred from homology"/>
<protein>
    <recommendedName>
        <fullName evidence="1">Probable inorganic carbon transporter subunit DabA</fullName>
    </recommendedName>
</protein>
<gene>
    <name evidence="1" type="primary">dabA</name>
    <name type="ordered locus">SAR0453</name>
</gene>